<sequence length="409" mass="42904">MSIGVQSSGINISNAELSRLVDAGMSELGGKAVRDDGRALARAEAALAAVVGERVSPRRDAGAGAQRVELAQPKPAAQTRATDRRTVSGMEREHRRLAASQMPAVTGMHEALVQRHVSPGGAKTPGEGGATRVGGDAPRFSFAEDKAFDAMIALGIAMQKNVQSDLVMQGKLTTLAHDAMMSAAAQDRSIGAAQMTAAIAGGALQAATSLGGAVQQMKGLGTKSMSIEKELKPQAELKQFHAEQALELRGINKPVLSNDEVSHVKVKRETGESVRHEIDPGGERMSDEHASVLAQEAPARQHRIDMHGMRHEQNLVKAGRQQMKGDLIQSGGQVGKNQIDGASAQQQGAERAEQKEDESAQQTAMAAASARDEAAHRGRDAAQKAIDAAKSQVANDNAVAAQVAGNLRT</sequence>
<organism>
    <name type="scientific">Burkholderia thailandensis (strain ATCC 700388 / DSM 13276 / CCUG 48851 / CIP 106301 / E264)</name>
    <dbReference type="NCBI Taxonomy" id="271848"/>
    <lineage>
        <taxon>Bacteria</taxon>
        <taxon>Pseudomonadati</taxon>
        <taxon>Pseudomonadota</taxon>
        <taxon>Betaproteobacteria</taxon>
        <taxon>Burkholderiales</taxon>
        <taxon>Burkholderiaceae</taxon>
        <taxon>Burkholderia</taxon>
        <taxon>pseudomallei group</taxon>
    </lineage>
</organism>
<keyword id="KW-0964">Secreted</keyword>
<keyword id="KW-0843">Virulence</keyword>
<dbReference type="EMBL" id="CP000085">
    <property type="protein sequence ID" value="ABC36055.1"/>
    <property type="molecule type" value="Genomic_DNA"/>
</dbReference>
<dbReference type="RefSeq" id="WP_009896151.1">
    <property type="nucleotide sequence ID" value="NC_007650.1"/>
</dbReference>
<dbReference type="GeneID" id="45118319"/>
<dbReference type="KEGG" id="bte:BTH_II0842"/>
<dbReference type="HOGENOM" id="CLU_661703_0_0_4"/>
<dbReference type="Proteomes" id="UP000001930">
    <property type="component" value="Chromosome II"/>
</dbReference>
<dbReference type="GO" id="GO:0005576">
    <property type="term" value="C:extracellular region"/>
    <property type="evidence" value="ECO:0007669"/>
    <property type="project" value="UniProtKB-SubCell"/>
</dbReference>
<dbReference type="InterPro" id="IPR005427">
    <property type="entry name" value="BipC/SctB"/>
</dbReference>
<dbReference type="NCBIfam" id="TIGR02101">
    <property type="entry name" value="IpaC_SipC"/>
    <property type="match status" value="1"/>
</dbReference>
<dbReference type="Pfam" id="PF09599">
    <property type="entry name" value="IpaC_SipC"/>
    <property type="match status" value="1"/>
</dbReference>
<dbReference type="PRINTS" id="PR01608">
    <property type="entry name" value="BACINVASINC"/>
</dbReference>
<comment type="subcellular location">
    <subcellularLocation>
        <location evidence="1">Secreted</location>
    </subcellularLocation>
    <text evidence="1">Secreted via the bsa type III secretion system.</text>
</comment>
<comment type="similarity">
    <text evidence="3">Belongs to the SctB/SipC family.</text>
</comment>
<proteinExistence type="inferred from homology"/>
<gene>
    <name type="primary">bipC</name>
    <name type="ordered locus">BTH_II0842</name>
</gene>
<reference key="1">
    <citation type="journal article" date="2005" name="BMC Genomics">
        <title>Bacterial genome adaptation to niches: divergence of the potential virulence genes in three Burkholderia species of different survival strategies.</title>
        <authorList>
            <person name="Kim H.S."/>
            <person name="Schell M.A."/>
            <person name="Yu Y."/>
            <person name="Ulrich R.L."/>
            <person name="Sarria S.H."/>
            <person name="Nierman W.C."/>
            <person name="DeShazer D."/>
        </authorList>
    </citation>
    <scope>NUCLEOTIDE SEQUENCE [LARGE SCALE GENOMIC DNA]</scope>
    <source>
        <strain>ATCC 700388 / DSM 13276 / CCUG 48851 / CIP 106301 / E264</strain>
    </source>
</reference>
<name>BIPC_BURTA</name>
<feature type="chain" id="PRO_0000344002" description="Effector protein BipC">
    <location>
        <begin position="1"/>
        <end position="409"/>
    </location>
</feature>
<feature type="region of interest" description="Disordered" evidence="2">
    <location>
        <begin position="268"/>
        <end position="287"/>
    </location>
</feature>
<feature type="region of interest" description="Disordered" evidence="2">
    <location>
        <begin position="330"/>
        <end position="396"/>
    </location>
</feature>
<feature type="compositionally biased region" description="Low complexity" evidence="2">
    <location>
        <begin position="360"/>
        <end position="369"/>
    </location>
</feature>
<feature type="compositionally biased region" description="Basic and acidic residues" evidence="2">
    <location>
        <begin position="370"/>
        <end position="382"/>
    </location>
</feature>
<protein>
    <recommendedName>
        <fullName>Effector protein BipC</fullName>
    </recommendedName>
</protein>
<evidence type="ECO:0000250" key="1"/>
<evidence type="ECO:0000256" key="2">
    <source>
        <dbReference type="SAM" id="MobiDB-lite"/>
    </source>
</evidence>
<evidence type="ECO:0000305" key="3"/>
<accession>Q2T710</accession>